<proteinExistence type="inferred from homology"/>
<evidence type="ECO:0000250" key="1">
    <source>
        <dbReference type="UniProtKB" id="A0A0H3KA40"/>
    </source>
</evidence>
<evidence type="ECO:0000250" key="2">
    <source>
        <dbReference type="UniProtKB" id="Q2FVT1"/>
    </source>
</evidence>
<evidence type="ECO:0000255" key="3"/>
<evidence type="ECO:0000256" key="4">
    <source>
        <dbReference type="SAM" id="MobiDB-lite"/>
    </source>
</evidence>
<evidence type="ECO:0000305" key="5"/>
<name>LYRA_STAA3</name>
<protein>
    <recommendedName>
        <fullName>Lysostaphin resistance protein A</fullName>
    </recommendedName>
    <alternativeName>
        <fullName evidence="1">Surface protein display C</fullName>
    </alternativeName>
</protein>
<reference key="1">
    <citation type="journal article" date="2006" name="Lancet">
        <title>Complete genome sequence of USA300, an epidemic clone of community-acquired meticillin-resistant Staphylococcus aureus.</title>
        <authorList>
            <person name="Diep B.A."/>
            <person name="Gill S.R."/>
            <person name="Chang R.F."/>
            <person name="Phan T.H."/>
            <person name="Chen J.H."/>
            <person name="Davidson M.G."/>
            <person name="Lin F."/>
            <person name="Lin J."/>
            <person name="Carleton H.A."/>
            <person name="Mongodin E.F."/>
            <person name="Sensabaugh G.F."/>
            <person name="Perdreau-Remington F."/>
        </authorList>
    </citation>
    <scope>NUCLEOTIDE SEQUENCE [LARGE SCALE GENOMIC DNA]</scope>
    <source>
        <strain>USA300</strain>
    </source>
</reference>
<sequence length="419" mass="46785">MKNNKISGFQWAMTIFVFFVITMALSIMLRDFQSIIGVKHFIFEVTDLAPLIAAIICILVFKYKKVQLAGLKFSISLKVIERLLLALILPLIILIIGMYSFNTFADSFILLQSTGLSVPITHILIGHILMAFVVEFGFRSYLQNIVETKMNTFFASIVVGLMYSVFSANTTYGTEFAAYNFLYTFSFSMILGELIRATKGRTIYIATTFHASMTFGLIFLFSEEIGDLFSIKVIAISTAIVAVGYIGLSLIIRGIAYLTTRRNLEELEPNNYLDHVNDDEETNHTEAEKSSSNIKDAEKTGVATASTVGVAKNDTENTVADEPSIHEGTEKTEPQHHIGNQTESNHDEDHDITSESVESAESVKQAPQSDDLTNDSNEDEIEQSLKEPATYKEDRRSSVVIDAEKHIEKTEEQSSDKNK</sequence>
<accession>Q2FEG1</accession>
<feature type="chain" id="PRO_0000274828" description="Lysostaphin resistance protein A">
    <location>
        <begin position="1"/>
        <end position="419"/>
    </location>
</feature>
<feature type="transmembrane region" description="Helical" evidence="3">
    <location>
        <begin position="9"/>
        <end position="29"/>
    </location>
</feature>
<feature type="transmembrane region" description="Helical" evidence="3">
    <location>
        <begin position="41"/>
        <end position="61"/>
    </location>
</feature>
<feature type="transmembrane region" description="Helical" evidence="3">
    <location>
        <begin position="84"/>
        <end position="104"/>
    </location>
</feature>
<feature type="transmembrane region" description="Helical" evidence="3">
    <location>
        <begin position="118"/>
        <end position="138"/>
    </location>
</feature>
<feature type="transmembrane region" description="Helical" evidence="3">
    <location>
        <begin position="153"/>
        <end position="173"/>
    </location>
</feature>
<feature type="transmembrane region" description="Helical" evidence="3">
    <location>
        <begin position="175"/>
        <end position="195"/>
    </location>
</feature>
<feature type="transmembrane region" description="Helical" evidence="3">
    <location>
        <begin position="202"/>
        <end position="222"/>
    </location>
</feature>
<feature type="transmembrane region" description="Helical" evidence="3">
    <location>
        <begin position="231"/>
        <end position="251"/>
    </location>
</feature>
<feature type="region of interest" description="Disordered" evidence="4">
    <location>
        <begin position="273"/>
        <end position="419"/>
    </location>
</feature>
<feature type="compositionally biased region" description="Basic and acidic residues" evidence="4">
    <location>
        <begin position="282"/>
        <end position="299"/>
    </location>
</feature>
<feature type="compositionally biased region" description="Basic and acidic residues" evidence="4">
    <location>
        <begin position="323"/>
        <end position="336"/>
    </location>
</feature>
<feature type="compositionally biased region" description="Basic and acidic residues" evidence="4">
    <location>
        <begin position="344"/>
        <end position="353"/>
    </location>
</feature>
<feature type="compositionally biased region" description="Acidic residues" evidence="4">
    <location>
        <begin position="372"/>
        <end position="382"/>
    </location>
</feature>
<feature type="compositionally biased region" description="Basic and acidic residues" evidence="4">
    <location>
        <begin position="383"/>
        <end position="419"/>
    </location>
</feature>
<keyword id="KW-1003">Cell membrane</keyword>
<keyword id="KW-0134">Cell wall</keyword>
<keyword id="KW-0472">Membrane</keyword>
<keyword id="KW-0964">Secreted</keyword>
<keyword id="KW-0812">Transmembrane</keyword>
<keyword id="KW-1133">Transmembrane helix</keyword>
<organism>
    <name type="scientific">Staphylococcus aureus (strain USA300)</name>
    <dbReference type="NCBI Taxonomy" id="367830"/>
    <lineage>
        <taxon>Bacteria</taxon>
        <taxon>Bacillati</taxon>
        <taxon>Bacillota</taxon>
        <taxon>Bacilli</taxon>
        <taxon>Bacillales</taxon>
        <taxon>Staphylococcaceae</taxon>
        <taxon>Staphylococcus</taxon>
    </lineage>
</organism>
<comment type="function">
    <text evidence="1 2">Involved in bacterial cell envelope homeostasis. Regulates peptidoglycan processing by N-acetylglucosaminidase SagB, perhaps acting as a scaffold protein. Pleiotropic regulator of gene expression, probably acting via interactions with multiple two-component systems (By similarity). Plays a role in the abundant deposition of the immunoglobulin G-binding protein A (spa) at the cross-wall, a subcellular structure that initially arises from cytokinesis (By similarity).</text>
</comment>
<comment type="subunit">
    <text evidence="2">Interacts with N-acetylglucosaminidase SagB; interaction is direct and facilitates peptidoglycan processing. Interacts (via N-terminal region including transmembrane domains) with sensor protein kinase WalK (via N-terminal region including transmembrane domains). Interacts (via N-terminal region including transmembrane domains) with sensor protein kinase SaeS. Interacts with other histidine kinases, perhaps via their transmembrane domains.</text>
</comment>
<comment type="subcellular location">
    <subcellularLocation>
        <location evidence="2">Cell membrane</location>
        <topology evidence="2">Multi-pass membrane protein</topology>
    </subcellularLocation>
    <subcellularLocation>
        <location evidence="1">Secreted</location>
        <location evidence="1">Cell wall</location>
    </subcellularLocation>
    <subcellularLocation>
        <location evidence="2">Cell septum</location>
    </subcellularLocation>
    <text evidence="1">Localization to the cross-wall is enriched in dividing cells.</text>
</comment>
<comment type="domain">
    <text evidence="2">C-terminal region not involved in glucosaminidase activity of the SagB-SpdC/LyrA complex.</text>
</comment>
<comment type="similarity">
    <text evidence="5">Belongs to the LyrA family.</text>
</comment>
<dbReference type="EMBL" id="CP000255">
    <property type="protein sequence ID" value="ABD21867.1"/>
    <property type="molecule type" value="Genomic_DNA"/>
</dbReference>
<dbReference type="RefSeq" id="WP_000794442.1">
    <property type="nucleotide sequence ID" value="NZ_CP027476.1"/>
</dbReference>
<dbReference type="SMR" id="Q2FEG1"/>
<dbReference type="KEGG" id="saa:SAUSA300_2282"/>
<dbReference type="HOGENOM" id="CLU_046135_0_0_9"/>
<dbReference type="OMA" id="MAFFAEF"/>
<dbReference type="Proteomes" id="UP000001939">
    <property type="component" value="Chromosome"/>
</dbReference>
<dbReference type="GO" id="GO:0005886">
    <property type="term" value="C:plasma membrane"/>
    <property type="evidence" value="ECO:0007669"/>
    <property type="project" value="UniProtKB-SubCell"/>
</dbReference>
<dbReference type="GO" id="GO:0004175">
    <property type="term" value="F:endopeptidase activity"/>
    <property type="evidence" value="ECO:0007669"/>
    <property type="project" value="UniProtKB-ARBA"/>
</dbReference>
<dbReference type="GO" id="GO:0080120">
    <property type="term" value="P:CAAX-box protein maturation"/>
    <property type="evidence" value="ECO:0007669"/>
    <property type="project" value="UniProtKB-ARBA"/>
</dbReference>
<dbReference type="InterPro" id="IPR003675">
    <property type="entry name" value="Rce1/LyrA-like_dom"/>
</dbReference>
<dbReference type="Pfam" id="PF02517">
    <property type="entry name" value="Rce1-like"/>
    <property type="match status" value="1"/>
</dbReference>
<gene>
    <name type="primary">lyrA</name>
    <name evidence="1" type="synonym">spdC</name>
    <name type="ordered locus">SAUSA300_2282</name>
</gene>